<sequence length="142" mass="15522">MVHFTAEEKAAITSLWGKMNVEEAGGEALGRLLVVYPWTQRFFDNFGNLSSPSAILGNPKVKAHGKKVLTSFGDAIKNMDNLKTTFAKLSELHCDKLHVDPENFRLLGNVLVIILATHFGKEFTPEVQAASQKLVSAVAIAL</sequence>
<gene>
    <name type="primary">HBE1</name>
</gene>
<comment type="function">
    <text>The epsilon chain is a beta-type chain of early mammalian embryonic hemoglobin.</text>
</comment>
<comment type="subunit">
    <text>Heterotetramer of two alpha chains and two epsilon chains in early embryonic hemoglobin Gower-2; two zeta chains and two epsilon chains in early embryonic hemoglobin Gower-1.</text>
</comment>
<comment type="tissue specificity">
    <text>Red blood cells.</text>
</comment>
<comment type="similarity">
    <text evidence="2">Belongs to the globin family.</text>
</comment>
<proteinExistence type="evidence at transcript level"/>
<evidence type="ECO:0000250" key="1">
    <source>
        <dbReference type="UniProtKB" id="P02100"/>
    </source>
</evidence>
<evidence type="ECO:0000255" key="2">
    <source>
        <dbReference type="PROSITE-ProRule" id="PRU00238"/>
    </source>
</evidence>
<organism>
    <name type="scientific">Callithrix geoffroyi</name>
    <name type="common">Geoffroy's marmoset</name>
    <dbReference type="NCBI Taxonomy" id="52231"/>
    <lineage>
        <taxon>Eukaryota</taxon>
        <taxon>Metazoa</taxon>
        <taxon>Chordata</taxon>
        <taxon>Craniata</taxon>
        <taxon>Vertebrata</taxon>
        <taxon>Euteleostomi</taxon>
        <taxon>Mammalia</taxon>
        <taxon>Eutheria</taxon>
        <taxon>Euarchontoglires</taxon>
        <taxon>Primates</taxon>
        <taxon>Haplorrhini</taxon>
        <taxon>Platyrrhini</taxon>
        <taxon>Cebidae</taxon>
        <taxon>Callitrichinae</taxon>
        <taxon>Callithrix</taxon>
        <taxon>Callithrix</taxon>
    </lineage>
</organism>
<name>HBE_CALGE</name>
<feature type="chain" id="PRO_0000053193" description="Hemoglobin subunit epsilon">
    <location>
        <begin position="1"/>
        <end position="142" status="greater than"/>
    </location>
</feature>
<feature type="domain" description="Globin" evidence="2">
    <location>
        <begin position="3"/>
        <end position="142"/>
    </location>
</feature>
<feature type="binding site" description="distal binding residue" evidence="2">
    <location>
        <position position="64"/>
    </location>
    <ligand>
        <name>heme b</name>
        <dbReference type="ChEBI" id="CHEBI:60344"/>
    </ligand>
    <ligandPart>
        <name>Fe</name>
        <dbReference type="ChEBI" id="CHEBI:18248"/>
    </ligandPart>
</feature>
<feature type="binding site" description="proximal binding residue" evidence="2">
    <location>
        <position position="93"/>
    </location>
    <ligand>
        <name>heme b</name>
        <dbReference type="ChEBI" id="CHEBI:60344"/>
    </ligand>
    <ligandPart>
        <name>Fe</name>
        <dbReference type="ChEBI" id="CHEBI:18248"/>
    </ligandPart>
</feature>
<feature type="modified residue" description="Phosphoserine" evidence="1">
    <location>
        <position position="14"/>
    </location>
</feature>
<feature type="modified residue" description="Phosphoserine" evidence="1">
    <location>
        <position position="51"/>
    </location>
</feature>
<feature type="non-terminal residue">
    <location>
        <position position="142"/>
    </location>
</feature>
<reference key="1">
    <citation type="journal article" date="1997" name="Gene">
        <title>Sequences of the primate epsilon-globin gene: implications for systematics of the marmosets and other New World primates.</title>
        <authorList>
            <person name="Porter C.A."/>
            <person name="Czelusniak J."/>
            <person name="Schneider H."/>
            <person name="Schneider M.P."/>
            <person name="Sampaio I."/>
            <person name="Goodman M."/>
        </authorList>
    </citation>
    <scope>NUCLEOTIDE SEQUENCE [GENOMIC DNA]</scope>
</reference>
<dbReference type="EMBL" id="U97029">
    <property type="protein sequence ID" value="AAC39572.1"/>
    <property type="molecule type" value="Genomic_DNA"/>
</dbReference>
<dbReference type="SMR" id="O13071"/>
<dbReference type="GO" id="GO:0072562">
    <property type="term" value="C:blood microparticle"/>
    <property type="evidence" value="ECO:0007669"/>
    <property type="project" value="TreeGrafter"/>
</dbReference>
<dbReference type="GO" id="GO:0031838">
    <property type="term" value="C:haptoglobin-hemoglobin complex"/>
    <property type="evidence" value="ECO:0007669"/>
    <property type="project" value="TreeGrafter"/>
</dbReference>
<dbReference type="GO" id="GO:0005833">
    <property type="term" value="C:hemoglobin complex"/>
    <property type="evidence" value="ECO:0007669"/>
    <property type="project" value="InterPro"/>
</dbReference>
<dbReference type="GO" id="GO:0031720">
    <property type="term" value="F:haptoglobin binding"/>
    <property type="evidence" value="ECO:0007669"/>
    <property type="project" value="TreeGrafter"/>
</dbReference>
<dbReference type="GO" id="GO:0020037">
    <property type="term" value="F:heme binding"/>
    <property type="evidence" value="ECO:0007669"/>
    <property type="project" value="InterPro"/>
</dbReference>
<dbReference type="GO" id="GO:0031721">
    <property type="term" value="F:hemoglobin alpha binding"/>
    <property type="evidence" value="ECO:0007669"/>
    <property type="project" value="TreeGrafter"/>
</dbReference>
<dbReference type="GO" id="GO:0046872">
    <property type="term" value="F:metal ion binding"/>
    <property type="evidence" value="ECO:0007669"/>
    <property type="project" value="UniProtKB-KW"/>
</dbReference>
<dbReference type="GO" id="GO:0043177">
    <property type="term" value="F:organic acid binding"/>
    <property type="evidence" value="ECO:0007669"/>
    <property type="project" value="TreeGrafter"/>
</dbReference>
<dbReference type="GO" id="GO:0019825">
    <property type="term" value="F:oxygen binding"/>
    <property type="evidence" value="ECO:0007669"/>
    <property type="project" value="InterPro"/>
</dbReference>
<dbReference type="GO" id="GO:0005344">
    <property type="term" value="F:oxygen carrier activity"/>
    <property type="evidence" value="ECO:0007669"/>
    <property type="project" value="UniProtKB-KW"/>
</dbReference>
<dbReference type="GO" id="GO:0004601">
    <property type="term" value="F:peroxidase activity"/>
    <property type="evidence" value="ECO:0007669"/>
    <property type="project" value="TreeGrafter"/>
</dbReference>
<dbReference type="GO" id="GO:0042744">
    <property type="term" value="P:hydrogen peroxide catabolic process"/>
    <property type="evidence" value="ECO:0007669"/>
    <property type="project" value="TreeGrafter"/>
</dbReference>
<dbReference type="CDD" id="cd08925">
    <property type="entry name" value="Hb-beta-like"/>
    <property type="match status" value="1"/>
</dbReference>
<dbReference type="FunFam" id="1.10.490.10:FF:000001">
    <property type="entry name" value="Hemoglobin subunit beta"/>
    <property type="match status" value="1"/>
</dbReference>
<dbReference type="Gene3D" id="1.10.490.10">
    <property type="entry name" value="Globins"/>
    <property type="match status" value="1"/>
</dbReference>
<dbReference type="InterPro" id="IPR000971">
    <property type="entry name" value="Globin"/>
</dbReference>
<dbReference type="InterPro" id="IPR009050">
    <property type="entry name" value="Globin-like_sf"/>
</dbReference>
<dbReference type="InterPro" id="IPR012292">
    <property type="entry name" value="Globin/Proto"/>
</dbReference>
<dbReference type="InterPro" id="IPR002337">
    <property type="entry name" value="Hemoglobin_b"/>
</dbReference>
<dbReference type="InterPro" id="IPR050056">
    <property type="entry name" value="Hemoglobin_oxygen_transport"/>
</dbReference>
<dbReference type="PANTHER" id="PTHR11442">
    <property type="entry name" value="HEMOGLOBIN FAMILY MEMBER"/>
    <property type="match status" value="1"/>
</dbReference>
<dbReference type="PANTHER" id="PTHR11442:SF7">
    <property type="entry name" value="HEMOGLOBIN SUBUNIT EPSILON"/>
    <property type="match status" value="1"/>
</dbReference>
<dbReference type="Pfam" id="PF00042">
    <property type="entry name" value="Globin"/>
    <property type="match status" value="1"/>
</dbReference>
<dbReference type="PRINTS" id="PR00814">
    <property type="entry name" value="BETAHAEM"/>
</dbReference>
<dbReference type="SUPFAM" id="SSF46458">
    <property type="entry name" value="Globin-like"/>
    <property type="match status" value="1"/>
</dbReference>
<dbReference type="PROSITE" id="PS01033">
    <property type="entry name" value="GLOBIN"/>
    <property type="match status" value="1"/>
</dbReference>
<accession>O13071</accession>
<keyword id="KW-0349">Heme</keyword>
<keyword id="KW-0408">Iron</keyword>
<keyword id="KW-0479">Metal-binding</keyword>
<keyword id="KW-0561">Oxygen transport</keyword>
<keyword id="KW-0597">Phosphoprotein</keyword>
<keyword id="KW-0813">Transport</keyword>
<protein>
    <recommendedName>
        <fullName>Hemoglobin subunit epsilon</fullName>
    </recommendedName>
    <alternativeName>
        <fullName>Epsilon-globin</fullName>
    </alternativeName>
    <alternativeName>
        <fullName>Hemoglobin epsilon chain</fullName>
    </alternativeName>
</protein>